<name>PDXT_THEVO</name>
<evidence type="ECO:0000255" key="1">
    <source>
        <dbReference type="HAMAP-Rule" id="MF_01615"/>
    </source>
</evidence>
<sequence>MNVGIIGFQGDVEEHIAIVKKISRRRKGINVLRIRRKEDLDRSDSLIIPGGESTTIYKLISEYGIYDEIIRRAKEGMPVMATCAGLILISKDTNDDRVPGMNLLDVTIMRNAYGRQVNSFETDIDIKGIGTFHAVFIRAPRIKEYGNVDVMASLDGYPVMVRSGNILGMTFHPELTGDVSIHEYFLSMGGGGYISTATG</sequence>
<proteinExistence type="inferred from homology"/>
<accession>Q97CP5</accession>
<reference key="1">
    <citation type="journal article" date="2000" name="Proc. Natl. Acad. Sci. U.S.A.">
        <title>Archaeal adaptation to higher temperatures revealed by genomic sequence of Thermoplasma volcanium.</title>
        <authorList>
            <person name="Kawashima T."/>
            <person name="Amano N."/>
            <person name="Koike H."/>
            <person name="Makino S."/>
            <person name="Higuchi S."/>
            <person name="Kawashima-Ohya Y."/>
            <person name="Watanabe K."/>
            <person name="Yamazaki M."/>
            <person name="Kanehori K."/>
            <person name="Kawamoto T."/>
            <person name="Nunoshiba T."/>
            <person name="Yamamoto Y."/>
            <person name="Aramaki H."/>
            <person name="Makino K."/>
            <person name="Suzuki M."/>
        </authorList>
    </citation>
    <scope>NUCLEOTIDE SEQUENCE [LARGE SCALE GENOMIC DNA]</scope>
    <source>
        <strain>ATCC 51530 / DSM 4299 / JCM 9571 / NBRC 15438 / GSS1</strain>
    </source>
</reference>
<organism>
    <name type="scientific">Thermoplasma volcanium (strain ATCC 51530 / DSM 4299 / JCM 9571 / NBRC 15438 / GSS1)</name>
    <dbReference type="NCBI Taxonomy" id="273116"/>
    <lineage>
        <taxon>Archaea</taxon>
        <taxon>Methanobacteriati</taxon>
        <taxon>Thermoplasmatota</taxon>
        <taxon>Thermoplasmata</taxon>
        <taxon>Thermoplasmatales</taxon>
        <taxon>Thermoplasmataceae</taxon>
        <taxon>Thermoplasma</taxon>
    </lineage>
</organism>
<feature type="chain" id="PRO_0000135695" description="Pyridoxal 5'-phosphate synthase subunit PdxT">
    <location>
        <begin position="1"/>
        <end position="199"/>
    </location>
</feature>
<feature type="active site" description="Nucleophile" evidence="1">
    <location>
        <position position="83"/>
    </location>
</feature>
<feature type="active site" description="Charge relay system" evidence="1">
    <location>
        <position position="172"/>
    </location>
</feature>
<feature type="active site" description="Charge relay system" evidence="1">
    <location>
        <position position="174"/>
    </location>
</feature>
<feature type="binding site" evidence="1">
    <location>
        <begin position="51"/>
        <end position="53"/>
    </location>
    <ligand>
        <name>L-glutamine</name>
        <dbReference type="ChEBI" id="CHEBI:58359"/>
    </ligand>
</feature>
<feature type="binding site" evidence="1">
    <location>
        <position position="110"/>
    </location>
    <ligand>
        <name>L-glutamine</name>
        <dbReference type="ChEBI" id="CHEBI:58359"/>
    </ligand>
</feature>
<feature type="binding site" evidence="1">
    <location>
        <begin position="137"/>
        <end position="138"/>
    </location>
    <ligand>
        <name>L-glutamine</name>
        <dbReference type="ChEBI" id="CHEBI:58359"/>
    </ligand>
</feature>
<protein>
    <recommendedName>
        <fullName evidence="1">Pyridoxal 5'-phosphate synthase subunit PdxT</fullName>
        <ecNumber evidence="1">4.3.3.6</ecNumber>
    </recommendedName>
    <alternativeName>
        <fullName evidence="1">Pdx2</fullName>
    </alternativeName>
    <alternativeName>
        <fullName evidence="1">Pyridoxal 5'-phosphate synthase glutaminase subunit</fullName>
        <ecNumber evidence="1">3.5.1.2</ecNumber>
    </alternativeName>
</protein>
<keyword id="KW-0315">Glutamine amidotransferase</keyword>
<keyword id="KW-0378">Hydrolase</keyword>
<keyword id="KW-0456">Lyase</keyword>
<keyword id="KW-0663">Pyridoxal phosphate</keyword>
<dbReference type="EC" id="4.3.3.6" evidence="1"/>
<dbReference type="EC" id="3.5.1.2" evidence="1"/>
<dbReference type="EMBL" id="BA000011">
    <property type="protein sequence ID" value="BAB59198.1"/>
    <property type="molecule type" value="Genomic_DNA"/>
</dbReference>
<dbReference type="RefSeq" id="WP_010916313.1">
    <property type="nucleotide sequence ID" value="NC_002689.2"/>
</dbReference>
<dbReference type="SMR" id="Q97CP5"/>
<dbReference type="STRING" id="273116.gene:9380821"/>
<dbReference type="PaxDb" id="273116-14324270"/>
<dbReference type="GeneID" id="1441543"/>
<dbReference type="KEGG" id="tvo:TVG0059350"/>
<dbReference type="eggNOG" id="arCOG00034">
    <property type="taxonomic scope" value="Archaea"/>
</dbReference>
<dbReference type="HOGENOM" id="CLU_069674_2_0_2"/>
<dbReference type="OrthoDB" id="26717at2157"/>
<dbReference type="PhylomeDB" id="Q97CP5"/>
<dbReference type="UniPathway" id="UPA00245"/>
<dbReference type="Proteomes" id="UP000001017">
    <property type="component" value="Chromosome"/>
</dbReference>
<dbReference type="GO" id="GO:0005829">
    <property type="term" value="C:cytosol"/>
    <property type="evidence" value="ECO:0007669"/>
    <property type="project" value="TreeGrafter"/>
</dbReference>
<dbReference type="GO" id="GO:1903600">
    <property type="term" value="C:glutaminase complex"/>
    <property type="evidence" value="ECO:0007669"/>
    <property type="project" value="TreeGrafter"/>
</dbReference>
<dbReference type="GO" id="GO:0004359">
    <property type="term" value="F:glutaminase activity"/>
    <property type="evidence" value="ECO:0007669"/>
    <property type="project" value="UniProtKB-UniRule"/>
</dbReference>
<dbReference type="GO" id="GO:0036381">
    <property type="term" value="F:pyridoxal 5'-phosphate synthase (glutamine hydrolysing) activity"/>
    <property type="evidence" value="ECO:0007669"/>
    <property type="project" value="UniProtKB-UniRule"/>
</dbReference>
<dbReference type="GO" id="GO:0006543">
    <property type="term" value="P:glutamine catabolic process"/>
    <property type="evidence" value="ECO:0007669"/>
    <property type="project" value="UniProtKB-UniRule"/>
</dbReference>
<dbReference type="GO" id="GO:0042823">
    <property type="term" value="P:pyridoxal phosphate biosynthetic process"/>
    <property type="evidence" value="ECO:0007669"/>
    <property type="project" value="UniProtKB-UniRule"/>
</dbReference>
<dbReference type="GO" id="GO:0008614">
    <property type="term" value="P:pyridoxine metabolic process"/>
    <property type="evidence" value="ECO:0007669"/>
    <property type="project" value="TreeGrafter"/>
</dbReference>
<dbReference type="CDD" id="cd01749">
    <property type="entry name" value="GATase1_PB"/>
    <property type="match status" value="1"/>
</dbReference>
<dbReference type="FunFam" id="3.40.50.880:FF:000010">
    <property type="entry name" value="uncharacterized protein LOC100176842 isoform X2"/>
    <property type="match status" value="1"/>
</dbReference>
<dbReference type="Gene3D" id="3.40.50.880">
    <property type="match status" value="1"/>
</dbReference>
<dbReference type="HAMAP" id="MF_01615">
    <property type="entry name" value="PdxT"/>
    <property type="match status" value="1"/>
</dbReference>
<dbReference type="InterPro" id="IPR029062">
    <property type="entry name" value="Class_I_gatase-like"/>
</dbReference>
<dbReference type="InterPro" id="IPR002161">
    <property type="entry name" value="PdxT/SNO"/>
</dbReference>
<dbReference type="InterPro" id="IPR021196">
    <property type="entry name" value="PdxT/SNO_CS"/>
</dbReference>
<dbReference type="NCBIfam" id="TIGR03800">
    <property type="entry name" value="PLP_synth_Pdx2"/>
    <property type="match status" value="1"/>
</dbReference>
<dbReference type="PANTHER" id="PTHR31559">
    <property type="entry name" value="PYRIDOXAL 5'-PHOSPHATE SYNTHASE SUBUNIT SNO"/>
    <property type="match status" value="1"/>
</dbReference>
<dbReference type="PANTHER" id="PTHR31559:SF0">
    <property type="entry name" value="PYRIDOXAL 5'-PHOSPHATE SYNTHASE SUBUNIT SNO1-RELATED"/>
    <property type="match status" value="1"/>
</dbReference>
<dbReference type="Pfam" id="PF01174">
    <property type="entry name" value="SNO"/>
    <property type="match status" value="1"/>
</dbReference>
<dbReference type="PIRSF" id="PIRSF005639">
    <property type="entry name" value="Glut_amidoT_SNO"/>
    <property type="match status" value="1"/>
</dbReference>
<dbReference type="SUPFAM" id="SSF52317">
    <property type="entry name" value="Class I glutamine amidotransferase-like"/>
    <property type="match status" value="1"/>
</dbReference>
<dbReference type="PROSITE" id="PS01236">
    <property type="entry name" value="PDXT_SNO_1"/>
    <property type="match status" value="1"/>
</dbReference>
<dbReference type="PROSITE" id="PS51130">
    <property type="entry name" value="PDXT_SNO_2"/>
    <property type="match status" value="1"/>
</dbReference>
<comment type="function">
    <text evidence="1">Catalyzes the hydrolysis of glutamine to glutamate and ammonia as part of the biosynthesis of pyridoxal 5'-phosphate. The resulting ammonia molecule is channeled to the active site of PdxS.</text>
</comment>
<comment type="catalytic activity">
    <reaction evidence="1">
        <text>aldehydo-D-ribose 5-phosphate + D-glyceraldehyde 3-phosphate + L-glutamine = pyridoxal 5'-phosphate + L-glutamate + phosphate + 3 H2O + H(+)</text>
        <dbReference type="Rhea" id="RHEA:31507"/>
        <dbReference type="ChEBI" id="CHEBI:15377"/>
        <dbReference type="ChEBI" id="CHEBI:15378"/>
        <dbReference type="ChEBI" id="CHEBI:29985"/>
        <dbReference type="ChEBI" id="CHEBI:43474"/>
        <dbReference type="ChEBI" id="CHEBI:58273"/>
        <dbReference type="ChEBI" id="CHEBI:58359"/>
        <dbReference type="ChEBI" id="CHEBI:59776"/>
        <dbReference type="ChEBI" id="CHEBI:597326"/>
        <dbReference type="EC" id="4.3.3.6"/>
    </reaction>
</comment>
<comment type="catalytic activity">
    <reaction evidence="1">
        <text>L-glutamine + H2O = L-glutamate + NH4(+)</text>
        <dbReference type="Rhea" id="RHEA:15889"/>
        <dbReference type="ChEBI" id="CHEBI:15377"/>
        <dbReference type="ChEBI" id="CHEBI:28938"/>
        <dbReference type="ChEBI" id="CHEBI:29985"/>
        <dbReference type="ChEBI" id="CHEBI:58359"/>
        <dbReference type="EC" id="3.5.1.2"/>
    </reaction>
</comment>
<comment type="pathway">
    <text evidence="1">Cofactor biosynthesis; pyridoxal 5'-phosphate biosynthesis.</text>
</comment>
<comment type="subunit">
    <text evidence="1">In the presence of PdxS, forms a dodecamer of heterodimers. Only shows activity in the heterodimer.</text>
</comment>
<comment type="similarity">
    <text evidence="1">Belongs to the glutaminase PdxT/SNO family.</text>
</comment>
<gene>
    <name evidence="1" type="primary">pdxT</name>
    <name type="ordered locus">TV0056</name>
    <name type="ORF">TVG0059350</name>
</gene>